<sequence length="461" mass="51093">MQKLFRTIPAIDKLMKKPQGIDLIERFGHQAFVQEARILIENAREQIIKQQCLPAFMNEQSSIFSLIEQNLQKKRMVSSKTVFNLTGTVLHTNLGRGLWSENAITAATNAMRNNVALEFDIDEGKRSHRDIYISQLIQQLTGAEAACIVNNNAAAVLLMLATFAQGKEVIVSRGELVEIGGAFRIPDIMAQAGCKLVEVGTTNRTHLRDYRNAINENTAFLMKVHTSNYHIQGFTKSVSEEELVELAKEFDLPVISDLGSGSLTDMAVLGLPAEPMVQQKVAAGVDLVSFSCDKLLGGPQAGIIVGKKALIDGLQSHPLKRVLRCDKVILSALEATLRHYLFPEKLTDEVPTFQLLTQSIETLQNKAERLKAVLNKRLDSRYILQVEPSLAQIGSGSLPTETLASVAVTVFAEKQSDLLELEKRFKALPSPIIGRFAQQKFWLDVRSAAQFEQLLNMLEEA</sequence>
<reference key="1">
    <citation type="journal article" date="2008" name="J. Bacteriol.">
        <title>The complete genome sequence of Actinobacillus pleuropneumoniae L20 (serotype 5b).</title>
        <authorList>
            <person name="Foote S.J."/>
            <person name="Bosse J.T."/>
            <person name="Bouevitch A.B."/>
            <person name="Langford P.R."/>
            <person name="Young N.M."/>
            <person name="Nash J.H.E."/>
        </authorList>
    </citation>
    <scope>NUCLEOTIDE SEQUENCE [LARGE SCALE GENOMIC DNA]</scope>
    <source>
        <strain>L20</strain>
    </source>
</reference>
<organism>
    <name type="scientific">Actinobacillus pleuropneumoniae serotype 5b (strain L20)</name>
    <dbReference type="NCBI Taxonomy" id="416269"/>
    <lineage>
        <taxon>Bacteria</taxon>
        <taxon>Pseudomonadati</taxon>
        <taxon>Pseudomonadota</taxon>
        <taxon>Gammaproteobacteria</taxon>
        <taxon>Pasteurellales</taxon>
        <taxon>Pasteurellaceae</taxon>
        <taxon>Actinobacillus</taxon>
    </lineage>
</organism>
<comment type="function">
    <text evidence="1">Converts seryl-tRNA(Sec) to selenocysteinyl-tRNA(Sec) required for selenoprotein biosynthesis.</text>
</comment>
<comment type="catalytic activity">
    <reaction evidence="1">
        <text>L-seryl-tRNA(Sec) + selenophosphate + H(+) = L-selenocysteinyl-tRNA(Sec) + phosphate</text>
        <dbReference type="Rhea" id="RHEA:22728"/>
        <dbReference type="Rhea" id="RHEA-COMP:9742"/>
        <dbReference type="Rhea" id="RHEA-COMP:9743"/>
        <dbReference type="ChEBI" id="CHEBI:15378"/>
        <dbReference type="ChEBI" id="CHEBI:16144"/>
        <dbReference type="ChEBI" id="CHEBI:43474"/>
        <dbReference type="ChEBI" id="CHEBI:78533"/>
        <dbReference type="ChEBI" id="CHEBI:78573"/>
        <dbReference type="EC" id="2.9.1.1"/>
    </reaction>
</comment>
<comment type="cofactor">
    <cofactor evidence="1">
        <name>pyridoxal 5'-phosphate</name>
        <dbReference type="ChEBI" id="CHEBI:597326"/>
    </cofactor>
</comment>
<comment type="pathway">
    <text evidence="1">Aminoacyl-tRNA biosynthesis; selenocysteinyl-tRNA(Sec) biosynthesis; selenocysteinyl-tRNA(Sec) from L-seryl-tRNA(Sec) (bacterial route): step 1/1.</text>
</comment>
<comment type="subcellular location">
    <subcellularLocation>
        <location evidence="1">Cytoplasm</location>
    </subcellularLocation>
</comment>
<comment type="similarity">
    <text evidence="1">Belongs to the SelA family.</text>
</comment>
<evidence type="ECO:0000255" key="1">
    <source>
        <dbReference type="HAMAP-Rule" id="MF_00423"/>
    </source>
</evidence>
<keyword id="KW-0963">Cytoplasm</keyword>
<keyword id="KW-0648">Protein biosynthesis</keyword>
<keyword id="KW-0663">Pyridoxal phosphate</keyword>
<keyword id="KW-1185">Reference proteome</keyword>
<keyword id="KW-0711">Selenium</keyword>
<keyword id="KW-0808">Transferase</keyword>
<protein>
    <recommendedName>
        <fullName evidence="1">L-seryl-tRNA(Sec) selenium transferase</fullName>
        <ecNumber evidence="1">2.9.1.1</ecNumber>
    </recommendedName>
    <alternativeName>
        <fullName evidence="1">Selenocysteine synthase</fullName>
        <shortName evidence="1">Sec synthase</shortName>
    </alternativeName>
    <alternativeName>
        <fullName evidence="1">Selenocysteinyl-tRNA(Sec) synthase</fullName>
    </alternativeName>
</protein>
<name>SELA_ACTP2</name>
<feature type="chain" id="PRO_1000050354" description="L-seryl-tRNA(Sec) selenium transferase">
    <location>
        <begin position="1"/>
        <end position="461"/>
    </location>
</feature>
<feature type="modified residue" description="N6-(pyridoxal phosphate)lysine" evidence="1">
    <location>
        <position position="294"/>
    </location>
</feature>
<proteinExistence type="inferred from homology"/>
<dbReference type="EC" id="2.9.1.1" evidence="1"/>
<dbReference type="EMBL" id="CP000569">
    <property type="protein sequence ID" value="ABN74646.1"/>
    <property type="molecule type" value="Genomic_DNA"/>
</dbReference>
<dbReference type="RefSeq" id="WP_009874568.1">
    <property type="nucleotide sequence ID" value="NC_009053.1"/>
</dbReference>
<dbReference type="SMR" id="A3N2L0"/>
<dbReference type="STRING" id="416269.APL_1562"/>
<dbReference type="EnsemblBacteria" id="ABN74646">
    <property type="protein sequence ID" value="ABN74646"/>
    <property type="gene ID" value="APL_1562"/>
</dbReference>
<dbReference type="KEGG" id="apl:APL_1562"/>
<dbReference type="PATRIC" id="fig|416269.6.peg.1626"/>
<dbReference type="eggNOG" id="COG1921">
    <property type="taxonomic scope" value="Bacteria"/>
</dbReference>
<dbReference type="HOGENOM" id="CLU_038142_1_0_6"/>
<dbReference type="UniPathway" id="UPA00906">
    <property type="reaction ID" value="UER00896"/>
</dbReference>
<dbReference type="Proteomes" id="UP000001432">
    <property type="component" value="Chromosome"/>
</dbReference>
<dbReference type="GO" id="GO:0005737">
    <property type="term" value="C:cytoplasm"/>
    <property type="evidence" value="ECO:0007669"/>
    <property type="project" value="UniProtKB-SubCell"/>
</dbReference>
<dbReference type="GO" id="GO:0004125">
    <property type="term" value="F:L-seryl-tRNA(Sec) selenium transferase activity"/>
    <property type="evidence" value="ECO:0007669"/>
    <property type="project" value="UniProtKB-UniRule"/>
</dbReference>
<dbReference type="GO" id="GO:0001717">
    <property type="term" value="P:conversion of seryl-tRNAsec to selenocys-tRNAsec"/>
    <property type="evidence" value="ECO:0007669"/>
    <property type="project" value="UniProtKB-UniRule"/>
</dbReference>
<dbReference type="GO" id="GO:0001514">
    <property type="term" value="P:selenocysteine incorporation"/>
    <property type="evidence" value="ECO:0007669"/>
    <property type="project" value="UniProtKB-UniRule"/>
</dbReference>
<dbReference type="FunFam" id="3.40.640.10:FF:000028">
    <property type="entry name" value="L-seryl-tRNA(Sec) selenium transferase"/>
    <property type="match status" value="1"/>
</dbReference>
<dbReference type="Gene3D" id="3.90.1150.180">
    <property type="match status" value="1"/>
</dbReference>
<dbReference type="Gene3D" id="3.40.640.10">
    <property type="entry name" value="Type I PLP-dependent aspartate aminotransferase-like (Major domain)"/>
    <property type="match status" value="1"/>
</dbReference>
<dbReference type="HAMAP" id="MF_00423">
    <property type="entry name" value="SelA"/>
    <property type="match status" value="1"/>
</dbReference>
<dbReference type="InterPro" id="IPR015424">
    <property type="entry name" value="PyrdxlP-dep_Trfase"/>
</dbReference>
<dbReference type="InterPro" id="IPR015421">
    <property type="entry name" value="PyrdxlP-dep_Trfase_major"/>
</dbReference>
<dbReference type="InterPro" id="IPR018319">
    <property type="entry name" value="SelA-like"/>
</dbReference>
<dbReference type="InterPro" id="IPR004534">
    <property type="entry name" value="SelA_trans"/>
</dbReference>
<dbReference type="InterPro" id="IPR025862">
    <property type="entry name" value="SelA_trans_N_dom"/>
</dbReference>
<dbReference type="NCBIfam" id="TIGR00474">
    <property type="entry name" value="selA"/>
    <property type="match status" value="1"/>
</dbReference>
<dbReference type="PANTHER" id="PTHR32328">
    <property type="entry name" value="L-SERYL-TRNA(SEC) SELENIUM TRANSFERASE"/>
    <property type="match status" value="1"/>
</dbReference>
<dbReference type="PANTHER" id="PTHR32328:SF0">
    <property type="entry name" value="L-SERYL-TRNA(SEC) SELENIUM TRANSFERASE"/>
    <property type="match status" value="1"/>
</dbReference>
<dbReference type="Pfam" id="PF12390">
    <property type="entry name" value="Se-cys_synth_N"/>
    <property type="match status" value="1"/>
</dbReference>
<dbReference type="Pfam" id="PF03841">
    <property type="entry name" value="SelA"/>
    <property type="match status" value="1"/>
</dbReference>
<dbReference type="SUPFAM" id="SSF53383">
    <property type="entry name" value="PLP-dependent transferases"/>
    <property type="match status" value="1"/>
</dbReference>
<accession>A3N2L0</accession>
<gene>
    <name evidence="1" type="primary">selA</name>
    <name type="ordered locus">APL_1562</name>
</gene>